<comment type="function">
    <text evidence="1">Required for the formation of a threonylcarbamoyl group on adenosine at position 37 (t(6)A37) in tRNAs that read codons beginning with adenine. Is involved in the transfer of the threonylcarbamoyl moiety of threonylcarbamoyl-AMP (TC-AMP) to the N6 group of A37, together with TsaE and TsaB. TsaD likely plays a direct catalytic role in this reaction.</text>
</comment>
<comment type="catalytic activity">
    <reaction evidence="1">
        <text>L-threonylcarbamoyladenylate + adenosine(37) in tRNA = N(6)-L-threonylcarbamoyladenosine(37) in tRNA + AMP + H(+)</text>
        <dbReference type="Rhea" id="RHEA:37059"/>
        <dbReference type="Rhea" id="RHEA-COMP:10162"/>
        <dbReference type="Rhea" id="RHEA-COMP:10163"/>
        <dbReference type="ChEBI" id="CHEBI:15378"/>
        <dbReference type="ChEBI" id="CHEBI:73682"/>
        <dbReference type="ChEBI" id="CHEBI:74411"/>
        <dbReference type="ChEBI" id="CHEBI:74418"/>
        <dbReference type="ChEBI" id="CHEBI:456215"/>
        <dbReference type="EC" id="2.3.1.234"/>
    </reaction>
</comment>
<comment type="cofactor">
    <cofactor evidence="1">
        <name>Fe(2+)</name>
        <dbReference type="ChEBI" id="CHEBI:29033"/>
    </cofactor>
    <text evidence="1">Binds 1 Fe(2+) ion per subunit.</text>
</comment>
<comment type="subcellular location">
    <subcellularLocation>
        <location evidence="1">Cytoplasm</location>
    </subcellularLocation>
</comment>
<comment type="similarity">
    <text evidence="1">Belongs to the KAE1 / TsaD family.</text>
</comment>
<reference key="1">
    <citation type="submission" date="2007-06" db="EMBL/GenBank/DDBJ databases">
        <title>Complete sequence of chromosome of Staphylococcus aureus subsp. aureus JH1.</title>
        <authorList>
            <consortium name="US DOE Joint Genome Institute"/>
            <person name="Copeland A."/>
            <person name="Lucas S."/>
            <person name="Lapidus A."/>
            <person name="Barry K."/>
            <person name="Detter J.C."/>
            <person name="Glavina del Rio T."/>
            <person name="Hammon N."/>
            <person name="Israni S."/>
            <person name="Dalin E."/>
            <person name="Tice H."/>
            <person name="Pitluck S."/>
            <person name="Chain P."/>
            <person name="Malfatti S."/>
            <person name="Shin M."/>
            <person name="Vergez L."/>
            <person name="Schmutz J."/>
            <person name="Larimer F."/>
            <person name="Land M."/>
            <person name="Hauser L."/>
            <person name="Kyrpides N."/>
            <person name="Ivanova N."/>
            <person name="Tomasz A."/>
            <person name="Richardson P."/>
        </authorList>
    </citation>
    <scope>NUCLEOTIDE SEQUENCE [LARGE SCALE GENOMIC DNA]</scope>
    <source>
        <strain>JH1</strain>
    </source>
</reference>
<accession>A6U3D4</accession>
<sequence>MTKDILILAVETSCDETSVSVIKNGRDILSNTVLSQIESHKRFGGVVPEVASRHHVEGITTTINEALVDADVSMEDIDAIAVTEGPGLIGALLIGVNAAKALAFAYDKPLIPVHHIAGHIYANHIEEPLTFPLIALIVSGGHTELVYMKDHLSFEVIGETRDDAVGEAYDKVARTIGLNYPGGPQVDRLAAEGEDTYSFPRVWLDKDSYDFSFSGLKSAVINQLHNQRQKNIPIIEANVATSFQNSVVEVLTFKAIQACKEYSVQRLIVAGGVASNKGLRQSLADQCKVNDIQLTIPSPKLCTDNAAMIGVAGHYLYQQGRFADLALNGHSNIDLEEYSAE</sequence>
<evidence type="ECO:0000255" key="1">
    <source>
        <dbReference type="HAMAP-Rule" id="MF_01445"/>
    </source>
</evidence>
<name>TSAD_STAA2</name>
<feature type="chain" id="PRO_1000087493" description="tRNA N6-adenosine threonylcarbamoyltransferase">
    <location>
        <begin position="1"/>
        <end position="341"/>
    </location>
</feature>
<feature type="binding site" evidence="1">
    <location>
        <position position="115"/>
    </location>
    <ligand>
        <name>Fe cation</name>
        <dbReference type="ChEBI" id="CHEBI:24875"/>
    </ligand>
</feature>
<feature type="binding site" evidence="1">
    <location>
        <position position="119"/>
    </location>
    <ligand>
        <name>Fe cation</name>
        <dbReference type="ChEBI" id="CHEBI:24875"/>
    </ligand>
</feature>
<feature type="binding site" evidence="1">
    <location>
        <begin position="137"/>
        <end position="141"/>
    </location>
    <ligand>
        <name>substrate</name>
    </ligand>
</feature>
<feature type="binding site" evidence="1">
    <location>
        <position position="170"/>
    </location>
    <ligand>
        <name>substrate</name>
    </ligand>
</feature>
<feature type="binding site" evidence="1">
    <location>
        <position position="183"/>
    </location>
    <ligand>
        <name>substrate</name>
    </ligand>
</feature>
<feature type="binding site" evidence="1">
    <location>
        <position position="187"/>
    </location>
    <ligand>
        <name>substrate</name>
    </ligand>
</feature>
<feature type="binding site" evidence="1">
    <location>
        <position position="276"/>
    </location>
    <ligand>
        <name>substrate</name>
    </ligand>
</feature>
<feature type="binding site" evidence="1">
    <location>
        <position position="304"/>
    </location>
    <ligand>
        <name>Fe cation</name>
        <dbReference type="ChEBI" id="CHEBI:24875"/>
    </ligand>
</feature>
<protein>
    <recommendedName>
        <fullName evidence="1">tRNA N6-adenosine threonylcarbamoyltransferase</fullName>
        <ecNumber evidence="1">2.3.1.234</ecNumber>
    </recommendedName>
    <alternativeName>
        <fullName evidence="1">N6-L-threonylcarbamoyladenine synthase</fullName>
        <shortName evidence="1">t(6)A synthase</shortName>
    </alternativeName>
    <alternativeName>
        <fullName evidence="1">t(6)A37 threonylcarbamoyladenosine biosynthesis protein TsaD</fullName>
    </alternativeName>
    <alternativeName>
        <fullName evidence="1">tRNA threonylcarbamoyladenosine biosynthesis protein TsaD</fullName>
    </alternativeName>
</protein>
<keyword id="KW-0012">Acyltransferase</keyword>
<keyword id="KW-0963">Cytoplasm</keyword>
<keyword id="KW-0408">Iron</keyword>
<keyword id="KW-0479">Metal-binding</keyword>
<keyword id="KW-0808">Transferase</keyword>
<keyword id="KW-0819">tRNA processing</keyword>
<organism>
    <name type="scientific">Staphylococcus aureus (strain JH1)</name>
    <dbReference type="NCBI Taxonomy" id="359787"/>
    <lineage>
        <taxon>Bacteria</taxon>
        <taxon>Bacillati</taxon>
        <taxon>Bacillota</taxon>
        <taxon>Bacilli</taxon>
        <taxon>Bacillales</taxon>
        <taxon>Staphylococcaceae</taxon>
        <taxon>Staphylococcus</taxon>
    </lineage>
</organism>
<proteinExistence type="inferred from homology"/>
<gene>
    <name evidence="1" type="primary">tsaD</name>
    <name type="synonym">gcp</name>
    <name type="ordered locus">SaurJH1_2123</name>
</gene>
<dbReference type="EC" id="2.3.1.234" evidence="1"/>
<dbReference type="EMBL" id="CP000736">
    <property type="protein sequence ID" value="ABR52952.1"/>
    <property type="molecule type" value="Genomic_DNA"/>
</dbReference>
<dbReference type="SMR" id="A6U3D4"/>
<dbReference type="KEGG" id="sah:SaurJH1_2123"/>
<dbReference type="HOGENOM" id="CLU_023208_0_2_9"/>
<dbReference type="GO" id="GO:0005737">
    <property type="term" value="C:cytoplasm"/>
    <property type="evidence" value="ECO:0007669"/>
    <property type="project" value="UniProtKB-SubCell"/>
</dbReference>
<dbReference type="GO" id="GO:0005506">
    <property type="term" value="F:iron ion binding"/>
    <property type="evidence" value="ECO:0007669"/>
    <property type="project" value="UniProtKB-UniRule"/>
</dbReference>
<dbReference type="GO" id="GO:0061711">
    <property type="term" value="F:N(6)-L-threonylcarbamoyladenine synthase activity"/>
    <property type="evidence" value="ECO:0007669"/>
    <property type="project" value="UniProtKB-EC"/>
</dbReference>
<dbReference type="GO" id="GO:0002949">
    <property type="term" value="P:tRNA threonylcarbamoyladenosine modification"/>
    <property type="evidence" value="ECO:0007669"/>
    <property type="project" value="UniProtKB-UniRule"/>
</dbReference>
<dbReference type="CDD" id="cd24133">
    <property type="entry name" value="ASKHA_NBD_TsaD_bac"/>
    <property type="match status" value="1"/>
</dbReference>
<dbReference type="FunFam" id="3.30.420.40:FF:000012">
    <property type="entry name" value="tRNA N6-adenosine threonylcarbamoyltransferase"/>
    <property type="match status" value="1"/>
</dbReference>
<dbReference type="FunFam" id="3.30.420.40:FF:000040">
    <property type="entry name" value="tRNA N6-adenosine threonylcarbamoyltransferase"/>
    <property type="match status" value="1"/>
</dbReference>
<dbReference type="Gene3D" id="3.30.420.40">
    <property type="match status" value="2"/>
</dbReference>
<dbReference type="HAMAP" id="MF_01445">
    <property type="entry name" value="TsaD"/>
    <property type="match status" value="1"/>
</dbReference>
<dbReference type="InterPro" id="IPR043129">
    <property type="entry name" value="ATPase_NBD"/>
</dbReference>
<dbReference type="InterPro" id="IPR000905">
    <property type="entry name" value="Gcp-like_dom"/>
</dbReference>
<dbReference type="InterPro" id="IPR017861">
    <property type="entry name" value="KAE1/TsaD"/>
</dbReference>
<dbReference type="InterPro" id="IPR017860">
    <property type="entry name" value="Peptidase_M22_CS"/>
</dbReference>
<dbReference type="InterPro" id="IPR022450">
    <property type="entry name" value="TsaD"/>
</dbReference>
<dbReference type="NCBIfam" id="TIGR00329">
    <property type="entry name" value="gcp_kae1"/>
    <property type="match status" value="1"/>
</dbReference>
<dbReference type="NCBIfam" id="TIGR03723">
    <property type="entry name" value="T6A_TsaD_YgjD"/>
    <property type="match status" value="1"/>
</dbReference>
<dbReference type="PANTHER" id="PTHR11735">
    <property type="entry name" value="TRNA N6-ADENOSINE THREONYLCARBAMOYLTRANSFERASE"/>
    <property type="match status" value="1"/>
</dbReference>
<dbReference type="PANTHER" id="PTHR11735:SF6">
    <property type="entry name" value="TRNA N6-ADENOSINE THREONYLCARBAMOYLTRANSFERASE, MITOCHONDRIAL"/>
    <property type="match status" value="1"/>
</dbReference>
<dbReference type="Pfam" id="PF00814">
    <property type="entry name" value="TsaD"/>
    <property type="match status" value="1"/>
</dbReference>
<dbReference type="PRINTS" id="PR00789">
    <property type="entry name" value="OSIALOPTASE"/>
</dbReference>
<dbReference type="SUPFAM" id="SSF53067">
    <property type="entry name" value="Actin-like ATPase domain"/>
    <property type="match status" value="2"/>
</dbReference>
<dbReference type="PROSITE" id="PS01016">
    <property type="entry name" value="GLYCOPROTEASE"/>
    <property type="match status" value="1"/>
</dbReference>